<organism>
    <name type="scientific">Glossophaga longirostris</name>
    <name type="common">Miller's long-tongued bat</name>
    <dbReference type="NCBI Taxonomy" id="177161"/>
    <lineage>
        <taxon>Eukaryota</taxon>
        <taxon>Metazoa</taxon>
        <taxon>Chordata</taxon>
        <taxon>Craniata</taxon>
        <taxon>Vertebrata</taxon>
        <taxon>Euteleostomi</taxon>
        <taxon>Mammalia</taxon>
        <taxon>Eutheria</taxon>
        <taxon>Laurasiatheria</taxon>
        <taxon>Chiroptera</taxon>
        <taxon>Yangochiroptera</taxon>
        <taxon>Phyllostomidae</taxon>
        <taxon>Glossophaginae</taxon>
        <taxon>Glossophaga</taxon>
    </lineage>
</organism>
<comment type="function">
    <text evidence="2">Component of the ubiquinol-cytochrome c reductase complex (complex III or cytochrome b-c1 complex) that is part of the mitochondrial respiratory chain. The b-c1 complex mediates electron transfer from ubiquinol to cytochrome c. Contributes to the generation of a proton gradient across the mitochondrial membrane that is then used for ATP synthesis.</text>
</comment>
<comment type="cofactor">
    <cofactor evidence="2">
        <name>heme b</name>
        <dbReference type="ChEBI" id="CHEBI:60344"/>
    </cofactor>
    <text evidence="2">Binds 2 heme b groups non-covalently.</text>
</comment>
<comment type="subunit">
    <text evidence="2">The cytochrome bc1 complex contains 11 subunits: 3 respiratory subunits (MT-CYB, CYC1 and UQCRFS1), 2 core proteins (UQCRC1 and UQCRC2) and 6 low-molecular weight proteins (UQCRH/QCR6, UQCRB/QCR7, UQCRQ/QCR8, UQCR10/QCR9, UQCR11/QCR10 and a cleavage product of UQCRFS1). This cytochrome bc1 complex then forms a dimer.</text>
</comment>
<comment type="subcellular location">
    <subcellularLocation>
        <location evidence="2">Mitochondrion inner membrane</location>
        <topology evidence="2">Multi-pass membrane protein</topology>
    </subcellularLocation>
</comment>
<comment type="miscellaneous">
    <text evidence="1">Heme 1 (or BL or b562) is low-potential and absorbs at about 562 nm, and heme 2 (or BH or b566) is high-potential and absorbs at about 566 nm.</text>
</comment>
<comment type="similarity">
    <text evidence="3 4">Belongs to the cytochrome b family.</text>
</comment>
<comment type="caution">
    <text evidence="2">The full-length protein contains only eight transmembrane helices, not nine as predicted by bioinformatics tools.</text>
</comment>
<protein>
    <recommendedName>
        <fullName>Cytochrome b</fullName>
    </recommendedName>
    <alternativeName>
        <fullName>Complex III subunit 3</fullName>
    </alternativeName>
    <alternativeName>
        <fullName>Complex III subunit III</fullName>
    </alternativeName>
    <alternativeName>
        <fullName>Cytochrome b-c1 complex subunit 3</fullName>
    </alternativeName>
    <alternativeName>
        <fullName>Ubiquinol-cytochrome-c reductase complex cytochrome b subunit</fullName>
    </alternativeName>
</protein>
<proteinExistence type="inferred from homology"/>
<accession>Q8WGG8</accession>
<accession>Q8WGG9</accession>
<accession>Q8WGH0</accession>
<accession>Q8WGH1</accession>
<name>CYB_GLOLO</name>
<geneLocation type="mitochondrion"/>
<gene>
    <name type="primary">MT-CYB</name>
    <name type="synonym">COB</name>
    <name type="synonym">CYTB</name>
    <name type="synonym">MTCYB</name>
</gene>
<keyword id="KW-0249">Electron transport</keyword>
<keyword id="KW-0349">Heme</keyword>
<keyword id="KW-0408">Iron</keyword>
<keyword id="KW-0472">Membrane</keyword>
<keyword id="KW-0479">Metal-binding</keyword>
<keyword id="KW-0496">Mitochondrion</keyword>
<keyword id="KW-0999">Mitochondrion inner membrane</keyword>
<keyword id="KW-0679">Respiratory chain</keyword>
<keyword id="KW-0812">Transmembrane</keyword>
<keyword id="KW-1133">Transmembrane helix</keyword>
<keyword id="KW-0813">Transport</keyword>
<keyword id="KW-0830">Ubiquinone</keyword>
<reference key="1">
    <citation type="journal article" date="2001" name="J. Mammal.">
        <title>Systematics of bats of the genus Glossophaga (Chiroptera: Phyllostomidae) and phylogeography in G. soricina based on the cytochrome b gene.</title>
        <authorList>
            <person name="Hoffmann F.G."/>
            <person name="Baker R.J."/>
        </authorList>
    </citation>
    <scope>NUCLEOTIDE SEQUENCE [GENOMIC DNA]</scope>
    <source>
        <strain>Isolate TK 18501</strain>
        <strain>Isolate TK 18613</strain>
        <strain>Isolate TK 18667</strain>
        <strain>Isolate USNM 580656</strain>
    </source>
</reference>
<evidence type="ECO:0000250" key="1"/>
<evidence type="ECO:0000250" key="2">
    <source>
        <dbReference type="UniProtKB" id="P00157"/>
    </source>
</evidence>
<evidence type="ECO:0000255" key="3">
    <source>
        <dbReference type="PROSITE-ProRule" id="PRU00967"/>
    </source>
</evidence>
<evidence type="ECO:0000255" key="4">
    <source>
        <dbReference type="PROSITE-ProRule" id="PRU00968"/>
    </source>
</evidence>
<dbReference type="EMBL" id="AF382868">
    <property type="protein sequence ID" value="AAL32342.1"/>
    <property type="molecule type" value="Genomic_DNA"/>
</dbReference>
<dbReference type="EMBL" id="AF382872">
    <property type="protein sequence ID" value="AAL32346.1"/>
    <property type="molecule type" value="Genomic_DNA"/>
</dbReference>
<dbReference type="EMBL" id="AF382873">
    <property type="protein sequence ID" value="AAL32347.1"/>
    <property type="molecule type" value="Genomic_DNA"/>
</dbReference>
<dbReference type="EMBL" id="AF382874">
    <property type="protein sequence ID" value="AAL32348.1"/>
    <property type="molecule type" value="Genomic_DNA"/>
</dbReference>
<dbReference type="GO" id="GO:0005743">
    <property type="term" value="C:mitochondrial inner membrane"/>
    <property type="evidence" value="ECO:0007669"/>
    <property type="project" value="UniProtKB-SubCell"/>
</dbReference>
<dbReference type="GO" id="GO:0045275">
    <property type="term" value="C:respiratory chain complex III"/>
    <property type="evidence" value="ECO:0007669"/>
    <property type="project" value="InterPro"/>
</dbReference>
<dbReference type="GO" id="GO:0046872">
    <property type="term" value="F:metal ion binding"/>
    <property type="evidence" value="ECO:0007669"/>
    <property type="project" value="UniProtKB-KW"/>
</dbReference>
<dbReference type="GO" id="GO:0008121">
    <property type="term" value="F:ubiquinol-cytochrome-c reductase activity"/>
    <property type="evidence" value="ECO:0007669"/>
    <property type="project" value="InterPro"/>
</dbReference>
<dbReference type="GO" id="GO:0006122">
    <property type="term" value="P:mitochondrial electron transport, ubiquinol to cytochrome c"/>
    <property type="evidence" value="ECO:0007669"/>
    <property type="project" value="TreeGrafter"/>
</dbReference>
<dbReference type="CDD" id="cd00290">
    <property type="entry name" value="cytochrome_b_C"/>
    <property type="match status" value="1"/>
</dbReference>
<dbReference type="CDD" id="cd00284">
    <property type="entry name" value="Cytochrome_b_N"/>
    <property type="match status" value="1"/>
</dbReference>
<dbReference type="FunFam" id="1.20.810.10:FF:000002">
    <property type="entry name" value="Cytochrome b"/>
    <property type="match status" value="1"/>
</dbReference>
<dbReference type="Gene3D" id="1.20.810.10">
    <property type="entry name" value="Cytochrome Bc1 Complex, Chain C"/>
    <property type="match status" value="1"/>
</dbReference>
<dbReference type="InterPro" id="IPR005798">
    <property type="entry name" value="Cyt_b/b6_C"/>
</dbReference>
<dbReference type="InterPro" id="IPR036150">
    <property type="entry name" value="Cyt_b/b6_C_sf"/>
</dbReference>
<dbReference type="InterPro" id="IPR005797">
    <property type="entry name" value="Cyt_b/b6_N"/>
</dbReference>
<dbReference type="InterPro" id="IPR027387">
    <property type="entry name" value="Cytb/b6-like_sf"/>
</dbReference>
<dbReference type="InterPro" id="IPR030689">
    <property type="entry name" value="Cytochrome_b"/>
</dbReference>
<dbReference type="InterPro" id="IPR048260">
    <property type="entry name" value="Cytochrome_b_C_euk/bac"/>
</dbReference>
<dbReference type="InterPro" id="IPR048259">
    <property type="entry name" value="Cytochrome_b_N_euk/bac"/>
</dbReference>
<dbReference type="InterPro" id="IPR016174">
    <property type="entry name" value="Di-haem_cyt_TM"/>
</dbReference>
<dbReference type="PANTHER" id="PTHR19271">
    <property type="entry name" value="CYTOCHROME B"/>
    <property type="match status" value="1"/>
</dbReference>
<dbReference type="PANTHER" id="PTHR19271:SF16">
    <property type="entry name" value="CYTOCHROME B"/>
    <property type="match status" value="1"/>
</dbReference>
<dbReference type="Pfam" id="PF00032">
    <property type="entry name" value="Cytochrom_B_C"/>
    <property type="match status" value="1"/>
</dbReference>
<dbReference type="Pfam" id="PF00033">
    <property type="entry name" value="Cytochrome_B"/>
    <property type="match status" value="1"/>
</dbReference>
<dbReference type="PIRSF" id="PIRSF038885">
    <property type="entry name" value="COB"/>
    <property type="match status" value="1"/>
</dbReference>
<dbReference type="SUPFAM" id="SSF81648">
    <property type="entry name" value="a domain/subunit of cytochrome bc1 complex (Ubiquinol-cytochrome c reductase)"/>
    <property type="match status" value="1"/>
</dbReference>
<dbReference type="SUPFAM" id="SSF81342">
    <property type="entry name" value="Transmembrane di-heme cytochromes"/>
    <property type="match status" value="1"/>
</dbReference>
<dbReference type="PROSITE" id="PS51003">
    <property type="entry name" value="CYTB_CTER"/>
    <property type="match status" value="1"/>
</dbReference>
<dbReference type="PROSITE" id="PS51002">
    <property type="entry name" value="CYTB_NTER"/>
    <property type="match status" value="1"/>
</dbReference>
<feature type="chain" id="PRO_0000061006" description="Cytochrome b">
    <location>
        <begin position="1"/>
        <end position="379"/>
    </location>
</feature>
<feature type="transmembrane region" description="Helical" evidence="2">
    <location>
        <begin position="33"/>
        <end position="53"/>
    </location>
</feature>
<feature type="transmembrane region" description="Helical" evidence="2">
    <location>
        <begin position="77"/>
        <end position="98"/>
    </location>
</feature>
<feature type="transmembrane region" description="Helical" evidence="2">
    <location>
        <begin position="113"/>
        <end position="133"/>
    </location>
</feature>
<feature type="transmembrane region" description="Helical" evidence="2">
    <location>
        <begin position="178"/>
        <end position="198"/>
    </location>
</feature>
<feature type="transmembrane region" description="Helical" evidence="2">
    <location>
        <begin position="226"/>
        <end position="246"/>
    </location>
</feature>
<feature type="transmembrane region" description="Helical" evidence="2">
    <location>
        <begin position="288"/>
        <end position="308"/>
    </location>
</feature>
<feature type="transmembrane region" description="Helical" evidence="2">
    <location>
        <begin position="320"/>
        <end position="340"/>
    </location>
</feature>
<feature type="transmembrane region" description="Helical" evidence="2">
    <location>
        <begin position="347"/>
        <end position="367"/>
    </location>
</feature>
<feature type="binding site" description="axial binding residue" evidence="2">
    <location>
        <position position="83"/>
    </location>
    <ligand>
        <name>heme b</name>
        <dbReference type="ChEBI" id="CHEBI:60344"/>
        <label>b562</label>
    </ligand>
    <ligandPart>
        <name>Fe</name>
        <dbReference type="ChEBI" id="CHEBI:18248"/>
    </ligandPart>
</feature>
<feature type="binding site" description="axial binding residue" evidence="2">
    <location>
        <position position="97"/>
    </location>
    <ligand>
        <name>heme b</name>
        <dbReference type="ChEBI" id="CHEBI:60344"/>
        <label>b566</label>
    </ligand>
    <ligandPart>
        <name>Fe</name>
        <dbReference type="ChEBI" id="CHEBI:18248"/>
    </ligandPart>
</feature>
<feature type="binding site" description="axial binding residue" evidence="2">
    <location>
        <position position="182"/>
    </location>
    <ligand>
        <name>heme b</name>
        <dbReference type="ChEBI" id="CHEBI:60344"/>
        <label>b562</label>
    </ligand>
    <ligandPart>
        <name>Fe</name>
        <dbReference type="ChEBI" id="CHEBI:18248"/>
    </ligandPart>
</feature>
<feature type="binding site" description="axial binding residue" evidence="2">
    <location>
        <position position="196"/>
    </location>
    <ligand>
        <name>heme b</name>
        <dbReference type="ChEBI" id="CHEBI:60344"/>
        <label>b566</label>
    </ligand>
    <ligandPart>
        <name>Fe</name>
        <dbReference type="ChEBI" id="CHEBI:18248"/>
    </ligandPart>
</feature>
<feature type="binding site" evidence="2">
    <location>
        <position position="201"/>
    </location>
    <ligand>
        <name>a ubiquinone</name>
        <dbReference type="ChEBI" id="CHEBI:16389"/>
    </ligand>
</feature>
<feature type="sequence variant" description="In strain: Isolate TK 18613.">
    <original>A</original>
    <variation>P</variation>
    <location>
        <position position="190"/>
    </location>
</feature>
<feature type="sequence variant" description="In strain: Isolate TK 18667.">
    <original>M</original>
    <variation>K</variation>
    <location>
        <position position="235"/>
    </location>
</feature>
<feature type="sequence variant" description="In strain: Isolate TK 18667.">
    <original>P</original>
    <variation>Q</variation>
    <location>
        <position position="253"/>
    </location>
</feature>
<feature type="sequence variant" description="In strain: Isolate TK 18667.">
    <original>L</original>
    <variation>M</variation>
    <location>
        <position position="288"/>
    </location>
</feature>
<feature type="sequence variant" description="In strain: Isolate TK 18501 and Isolate TK 18613.">
    <original>V</original>
    <variation>I</variation>
    <location>
        <position position="348"/>
    </location>
</feature>
<sequence>MTNIRKTHPLLKIINSSFVDLPAPSSLSSWWNFGSLLGVCLAVQILTGLFLAMHYTSDTATAFNSVTHICRDVNYGWVLRYLHANGASMFFICLYLHVGRGLYYGSYMYSETWNIGILLLFAVMATAFMGYVLPWGQMSFWGATVITNLLSAIPYIGTDLVQWIWGGFSVDKATLTRFFAFHFLFPFIVAALVMVHLLFLHETGSNNPTGIPSDSDMIPFHPYYTIKDILGFLIMLTALSALVLFSPDLLGDPDNYMPANPLNTPPHIKPEWYFLFAYAILRSIPNKLGGVLALVLSILVLAIVPMLHTSKQRSMMFRPLSQCLFWFLVAILLTLTWIGGQPVEXPYVIIGQTASVLYFLTILVFMPLVSIMENHLLKW</sequence>